<dbReference type="EC" id="7.1.1.-" evidence="1"/>
<dbReference type="EMBL" id="AJ749949">
    <property type="protein sequence ID" value="CAG44667.1"/>
    <property type="molecule type" value="Genomic_DNA"/>
</dbReference>
<dbReference type="RefSeq" id="WP_011242224.1">
    <property type="nucleotide sequence ID" value="NZ_CP010290.1"/>
</dbReference>
<dbReference type="RefSeq" id="YP_169110.1">
    <property type="nucleotide sequence ID" value="NC_006570.2"/>
</dbReference>
<dbReference type="SMR" id="Q5NIN2"/>
<dbReference type="STRING" id="177416.FTT_0034"/>
<dbReference type="DNASU" id="3191807"/>
<dbReference type="EnsemblBacteria" id="CAG44667">
    <property type="protein sequence ID" value="CAG44667"/>
    <property type="gene ID" value="FTT_0034"/>
</dbReference>
<dbReference type="KEGG" id="ftu:FTT_0034"/>
<dbReference type="eggNOG" id="COG0649">
    <property type="taxonomic scope" value="Bacteria"/>
</dbReference>
<dbReference type="OrthoDB" id="9801496at2"/>
<dbReference type="Proteomes" id="UP000001174">
    <property type="component" value="Chromosome"/>
</dbReference>
<dbReference type="GO" id="GO:0005886">
    <property type="term" value="C:plasma membrane"/>
    <property type="evidence" value="ECO:0007669"/>
    <property type="project" value="UniProtKB-SubCell"/>
</dbReference>
<dbReference type="GO" id="GO:0051287">
    <property type="term" value="F:NAD binding"/>
    <property type="evidence" value="ECO:0007669"/>
    <property type="project" value="InterPro"/>
</dbReference>
<dbReference type="GO" id="GO:0050136">
    <property type="term" value="F:NADH:ubiquinone reductase (non-electrogenic) activity"/>
    <property type="evidence" value="ECO:0007669"/>
    <property type="project" value="UniProtKB-UniRule"/>
</dbReference>
<dbReference type="GO" id="GO:0048038">
    <property type="term" value="F:quinone binding"/>
    <property type="evidence" value="ECO:0007669"/>
    <property type="project" value="UniProtKB-KW"/>
</dbReference>
<dbReference type="FunFam" id="1.10.645.10:FF:000005">
    <property type="entry name" value="NADH-quinone oxidoreductase subunit D"/>
    <property type="match status" value="1"/>
</dbReference>
<dbReference type="Gene3D" id="1.10.645.10">
    <property type="entry name" value="Cytochrome-c3 Hydrogenase, chain B"/>
    <property type="match status" value="1"/>
</dbReference>
<dbReference type="HAMAP" id="MF_01358">
    <property type="entry name" value="NDH1_NuoD"/>
    <property type="match status" value="1"/>
</dbReference>
<dbReference type="InterPro" id="IPR001135">
    <property type="entry name" value="NADH_Q_OxRdtase_suD"/>
</dbReference>
<dbReference type="InterPro" id="IPR014029">
    <property type="entry name" value="NADH_UbQ_OxRdtase_49kDa_CS"/>
</dbReference>
<dbReference type="InterPro" id="IPR022885">
    <property type="entry name" value="NDH1_su_D/H"/>
</dbReference>
<dbReference type="InterPro" id="IPR029014">
    <property type="entry name" value="NiFe-Hase_large"/>
</dbReference>
<dbReference type="NCBIfam" id="TIGR01962">
    <property type="entry name" value="NuoD"/>
    <property type="match status" value="1"/>
</dbReference>
<dbReference type="NCBIfam" id="NF004739">
    <property type="entry name" value="PRK06075.1"/>
    <property type="match status" value="1"/>
</dbReference>
<dbReference type="PANTHER" id="PTHR11993:SF10">
    <property type="entry name" value="NADH DEHYDROGENASE [UBIQUINONE] IRON-SULFUR PROTEIN 2, MITOCHONDRIAL"/>
    <property type="match status" value="1"/>
</dbReference>
<dbReference type="PANTHER" id="PTHR11993">
    <property type="entry name" value="NADH-UBIQUINONE OXIDOREDUCTASE 49 KDA SUBUNIT"/>
    <property type="match status" value="1"/>
</dbReference>
<dbReference type="Pfam" id="PF00346">
    <property type="entry name" value="Complex1_49kDa"/>
    <property type="match status" value="1"/>
</dbReference>
<dbReference type="SUPFAM" id="SSF56762">
    <property type="entry name" value="HydB/Nqo4-like"/>
    <property type="match status" value="1"/>
</dbReference>
<dbReference type="PROSITE" id="PS00535">
    <property type="entry name" value="COMPLEX1_49K"/>
    <property type="match status" value="1"/>
</dbReference>
<evidence type="ECO:0000255" key="1">
    <source>
        <dbReference type="HAMAP-Rule" id="MF_01358"/>
    </source>
</evidence>
<sequence length="417" mass="47573">MAEYKNYTLNFGPVHPAAHGVLRLILELDGENVVRADPHVGLLHRGTEKLAEFKPYNQSIGYMDRLDYVSMMCNEHAYVMAIEKLLQLEVPERAKYIRVMFAEMTRILNHLLWVAACGIDLGAMTVFLYAFRVREDLFDCYEAVSGARMHAAYFRPGGVARDLPTQMPQYQKTRFTSKRKAKKLNEPRQGSMLDFLDHFVVDFEKSLDEIDTLLTDNRLWKQRTVDIGTVTAERAKELGFTGPMLRGSGVAWDLRKTQPYEVYHKLEFDIPIGANGDCYDRYLVRMAEMRESNKLIKQCVDWLRANPGPVLSDNNKVAPPKRNAMKNNMEELIHHFKLFSEGYCTTEGEVYVGTEHPKGEFGVYIKSDGANKPYRLKMRAPGFAHISAMDELLSGHMLADTPAIISTIDVVFGDVDR</sequence>
<protein>
    <recommendedName>
        <fullName evidence="1">NADH-quinone oxidoreductase subunit D</fullName>
        <ecNumber evidence="1">7.1.1.-</ecNumber>
    </recommendedName>
    <alternativeName>
        <fullName evidence="1">NADH dehydrogenase I subunit D</fullName>
    </alternativeName>
    <alternativeName>
        <fullName evidence="1">NDH-1 subunit D</fullName>
    </alternativeName>
</protein>
<feature type="chain" id="PRO_0000371870" description="NADH-quinone oxidoreductase subunit D">
    <location>
        <begin position="1"/>
        <end position="417"/>
    </location>
</feature>
<name>NUOD_FRATT</name>
<reference key="1">
    <citation type="journal article" date="2005" name="Nat. Genet.">
        <title>The complete genome sequence of Francisella tularensis, the causative agent of tularemia.</title>
        <authorList>
            <person name="Larsson P."/>
            <person name="Oyston P.C.F."/>
            <person name="Chain P."/>
            <person name="Chu M.C."/>
            <person name="Duffield M."/>
            <person name="Fuxelius H.-H."/>
            <person name="Garcia E."/>
            <person name="Haelltorp G."/>
            <person name="Johansson D."/>
            <person name="Isherwood K.E."/>
            <person name="Karp P.D."/>
            <person name="Larsson E."/>
            <person name="Liu Y."/>
            <person name="Michell S."/>
            <person name="Prior J."/>
            <person name="Prior R."/>
            <person name="Malfatti S."/>
            <person name="Sjoestedt A."/>
            <person name="Svensson K."/>
            <person name="Thompson N."/>
            <person name="Vergez L."/>
            <person name="Wagg J.K."/>
            <person name="Wren B.W."/>
            <person name="Lindler L.E."/>
            <person name="Andersson S.G.E."/>
            <person name="Forsman M."/>
            <person name="Titball R.W."/>
        </authorList>
    </citation>
    <scope>NUCLEOTIDE SEQUENCE [LARGE SCALE GENOMIC DNA]</scope>
    <source>
        <strain>SCHU S4 / Schu 4</strain>
    </source>
</reference>
<organism>
    <name type="scientific">Francisella tularensis subsp. tularensis (strain SCHU S4 / Schu 4)</name>
    <dbReference type="NCBI Taxonomy" id="177416"/>
    <lineage>
        <taxon>Bacteria</taxon>
        <taxon>Pseudomonadati</taxon>
        <taxon>Pseudomonadota</taxon>
        <taxon>Gammaproteobacteria</taxon>
        <taxon>Thiotrichales</taxon>
        <taxon>Francisellaceae</taxon>
        <taxon>Francisella</taxon>
    </lineage>
</organism>
<accession>Q5NIN2</accession>
<gene>
    <name evidence="1" type="primary">nuoD</name>
    <name type="ordered locus">FTT_0034</name>
</gene>
<keyword id="KW-0997">Cell inner membrane</keyword>
<keyword id="KW-1003">Cell membrane</keyword>
<keyword id="KW-0472">Membrane</keyword>
<keyword id="KW-0520">NAD</keyword>
<keyword id="KW-0874">Quinone</keyword>
<keyword id="KW-1185">Reference proteome</keyword>
<keyword id="KW-1278">Translocase</keyword>
<keyword id="KW-0813">Transport</keyword>
<keyword id="KW-0830">Ubiquinone</keyword>
<proteinExistence type="inferred from homology"/>
<comment type="function">
    <text evidence="1">NDH-1 shuttles electrons from NADH, via FMN and iron-sulfur (Fe-S) centers, to quinones in the respiratory chain. The immediate electron acceptor for the enzyme in this species is believed to be ubiquinone. Couples the redox reaction to proton translocation (for every two electrons transferred, four hydrogen ions are translocated across the cytoplasmic membrane), and thus conserves the redox energy in a proton gradient.</text>
</comment>
<comment type="catalytic activity">
    <reaction evidence="1">
        <text>a quinone + NADH + 5 H(+)(in) = a quinol + NAD(+) + 4 H(+)(out)</text>
        <dbReference type="Rhea" id="RHEA:57888"/>
        <dbReference type="ChEBI" id="CHEBI:15378"/>
        <dbReference type="ChEBI" id="CHEBI:24646"/>
        <dbReference type="ChEBI" id="CHEBI:57540"/>
        <dbReference type="ChEBI" id="CHEBI:57945"/>
        <dbReference type="ChEBI" id="CHEBI:132124"/>
    </reaction>
</comment>
<comment type="subunit">
    <text evidence="1">NDH-1 is composed of 14 different subunits. Subunits NuoB, C, D, E, F, and G constitute the peripheral sector of the complex.</text>
</comment>
<comment type="subcellular location">
    <subcellularLocation>
        <location evidence="1">Cell inner membrane</location>
        <topology evidence="1">Peripheral membrane protein</topology>
        <orientation evidence="1">Cytoplasmic side</orientation>
    </subcellularLocation>
</comment>
<comment type="similarity">
    <text evidence="1">Belongs to the complex I 49 kDa subunit family.</text>
</comment>